<organism>
    <name type="scientific">Rickettsia africae (strain ESF-5)</name>
    <dbReference type="NCBI Taxonomy" id="347255"/>
    <lineage>
        <taxon>Bacteria</taxon>
        <taxon>Pseudomonadati</taxon>
        <taxon>Pseudomonadota</taxon>
        <taxon>Alphaproteobacteria</taxon>
        <taxon>Rickettsiales</taxon>
        <taxon>Rickettsiaceae</taxon>
        <taxon>Rickettsieae</taxon>
        <taxon>Rickettsia</taxon>
        <taxon>spotted fever group</taxon>
    </lineage>
</organism>
<reference key="1">
    <citation type="journal article" date="2009" name="BMC Genomics">
        <title>Analysis of the Rickettsia africae genome reveals that virulence acquisition in Rickettsia species may be explained by genome reduction.</title>
        <authorList>
            <person name="Fournier P.-E."/>
            <person name="El Karkouri K."/>
            <person name="Leroy Q."/>
            <person name="Robert C."/>
            <person name="Giumelli B."/>
            <person name="Renesto P."/>
            <person name="Socolovschi C."/>
            <person name="Parola P."/>
            <person name="Audic S."/>
            <person name="Raoult D."/>
        </authorList>
    </citation>
    <scope>NUCLEOTIDE SEQUENCE [LARGE SCALE GENOMIC DNA]</scope>
    <source>
        <strain>ESF-5</strain>
    </source>
</reference>
<comment type="catalytic activity">
    <reaction evidence="1">
        <text>tRNA(Cys) + L-cysteine + ATP = L-cysteinyl-tRNA(Cys) + AMP + diphosphate</text>
        <dbReference type="Rhea" id="RHEA:17773"/>
        <dbReference type="Rhea" id="RHEA-COMP:9661"/>
        <dbReference type="Rhea" id="RHEA-COMP:9679"/>
        <dbReference type="ChEBI" id="CHEBI:30616"/>
        <dbReference type="ChEBI" id="CHEBI:33019"/>
        <dbReference type="ChEBI" id="CHEBI:35235"/>
        <dbReference type="ChEBI" id="CHEBI:78442"/>
        <dbReference type="ChEBI" id="CHEBI:78517"/>
        <dbReference type="ChEBI" id="CHEBI:456215"/>
        <dbReference type="EC" id="6.1.1.16"/>
    </reaction>
</comment>
<comment type="cofactor">
    <cofactor evidence="1">
        <name>Zn(2+)</name>
        <dbReference type="ChEBI" id="CHEBI:29105"/>
    </cofactor>
    <text evidence="1">Binds 1 zinc ion per subunit.</text>
</comment>
<comment type="subunit">
    <text evidence="1">Monomer.</text>
</comment>
<comment type="subcellular location">
    <subcellularLocation>
        <location evidence="1">Cytoplasm</location>
    </subcellularLocation>
</comment>
<comment type="similarity">
    <text evidence="1">Belongs to the class-I aminoacyl-tRNA synthetase family.</text>
</comment>
<proteinExistence type="inferred from homology"/>
<name>SYC_RICAE</name>
<protein>
    <recommendedName>
        <fullName evidence="1">Cysteine--tRNA ligase</fullName>
        <ecNumber evidence="1">6.1.1.16</ecNumber>
    </recommendedName>
    <alternativeName>
        <fullName evidence="1">Cysteinyl-tRNA synthetase</fullName>
        <shortName evidence="1">CysRS</shortName>
    </alternativeName>
</protein>
<feature type="chain" id="PRO_1000202131" description="Cysteine--tRNA ligase">
    <location>
        <begin position="1"/>
        <end position="459"/>
    </location>
</feature>
<feature type="short sequence motif" description="'HIGH' region">
    <location>
        <begin position="33"/>
        <end position="43"/>
    </location>
</feature>
<feature type="short sequence motif" description="'KMSKS' region">
    <location>
        <begin position="274"/>
        <end position="278"/>
    </location>
</feature>
<feature type="binding site" evidence="1">
    <location>
        <position position="31"/>
    </location>
    <ligand>
        <name>Zn(2+)</name>
        <dbReference type="ChEBI" id="CHEBI:29105"/>
    </ligand>
</feature>
<feature type="binding site" evidence="1">
    <location>
        <position position="216"/>
    </location>
    <ligand>
        <name>Zn(2+)</name>
        <dbReference type="ChEBI" id="CHEBI:29105"/>
    </ligand>
</feature>
<feature type="binding site" evidence="1">
    <location>
        <position position="241"/>
    </location>
    <ligand>
        <name>Zn(2+)</name>
        <dbReference type="ChEBI" id="CHEBI:29105"/>
    </ligand>
</feature>
<feature type="binding site" evidence="1">
    <location>
        <position position="245"/>
    </location>
    <ligand>
        <name>Zn(2+)</name>
        <dbReference type="ChEBI" id="CHEBI:29105"/>
    </ligand>
</feature>
<feature type="binding site" evidence="1">
    <location>
        <position position="277"/>
    </location>
    <ligand>
        <name>ATP</name>
        <dbReference type="ChEBI" id="CHEBI:30616"/>
    </ligand>
</feature>
<sequence>MQIQFHLYNTLSRTKEVFNPQDQANVKMYVCGPTVYYNPHIGNSRSGVVYDLLYRIVIKIFGEKAVKYVRNITDVDDKIIDRAALLGVTIDELTDKVTKEFHKNMAYLGCMLPSIEPKATKHIDVMIAIIERLIAKDHAYIADNHVYFDVLSAPNYTELSNRNLEEMFEGVHVENSKTKKNPQDFVLWKPAKQNESANMNFESPWGLGRPGWHIECSAMSYKYLGENFDIHGGGADLIFPHHTNEIAQSRCAFPSSTYAKYWVHNGFLTVNGEKMSKSLGNFITVRDLMDKQIQGEVVRLFLLSSHYRRPLDYNDKAIEDAKKTLNYWYRAIENINVQKIDLPHDFMQSLLDDMNTPLAVKIINDYAKGVFISKTEEERQLNASAIITCANFIGLMNKTPNEWFNSGVDELYVNELVNKRLEAKKQKNWLLADQIRNQLLEEKIILEDRPDGTTIWRKE</sequence>
<gene>
    <name evidence="1" type="primary">cysS</name>
    <name type="ordered locus">RAF_ORF0106</name>
</gene>
<evidence type="ECO:0000255" key="1">
    <source>
        <dbReference type="HAMAP-Rule" id="MF_00041"/>
    </source>
</evidence>
<keyword id="KW-0030">Aminoacyl-tRNA synthetase</keyword>
<keyword id="KW-0067">ATP-binding</keyword>
<keyword id="KW-0963">Cytoplasm</keyword>
<keyword id="KW-0436">Ligase</keyword>
<keyword id="KW-0479">Metal-binding</keyword>
<keyword id="KW-0547">Nucleotide-binding</keyword>
<keyword id="KW-0648">Protein biosynthesis</keyword>
<keyword id="KW-0862">Zinc</keyword>
<accession>C3PMC1</accession>
<dbReference type="EC" id="6.1.1.16" evidence="1"/>
<dbReference type="EMBL" id="CP001612">
    <property type="protein sequence ID" value="ACP53081.1"/>
    <property type="molecule type" value="Genomic_DNA"/>
</dbReference>
<dbReference type="RefSeq" id="WP_012719374.1">
    <property type="nucleotide sequence ID" value="NC_012633.1"/>
</dbReference>
<dbReference type="SMR" id="C3PMC1"/>
<dbReference type="KEGG" id="raf:RAF_ORF0106"/>
<dbReference type="HOGENOM" id="CLU_013528_0_1_5"/>
<dbReference type="Proteomes" id="UP000002305">
    <property type="component" value="Chromosome"/>
</dbReference>
<dbReference type="GO" id="GO:0005829">
    <property type="term" value="C:cytosol"/>
    <property type="evidence" value="ECO:0007669"/>
    <property type="project" value="TreeGrafter"/>
</dbReference>
<dbReference type="GO" id="GO:0005524">
    <property type="term" value="F:ATP binding"/>
    <property type="evidence" value="ECO:0007669"/>
    <property type="project" value="UniProtKB-UniRule"/>
</dbReference>
<dbReference type="GO" id="GO:0004817">
    <property type="term" value="F:cysteine-tRNA ligase activity"/>
    <property type="evidence" value="ECO:0007669"/>
    <property type="project" value="UniProtKB-UniRule"/>
</dbReference>
<dbReference type="GO" id="GO:0008270">
    <property type="term" value="F:zinc ion binding"/>
    <property type="evidence" value="ECO:0007669"/>
    <property type="project" value="UniProtKB-UniRule"/>
</dbReference>
<dbReference type="GO" id="GO:0006423">
    <property type="term" value="P:cysteinyl-tRNA aminoacylation"/>
    <property type="evidence" value="ECO:0007669"/>
    <property type="project" value="UniProtKB-UniRule"/>
</dbReference>
<dbReference type="CDD" id="cd00672">
    <property type="entry name" value="CysRS_core"/>
    <property type="match status" value="1"/>
</dbReference>
<dbReference type="FunFam" id="3.40.50.620:FF:000068">
    <property type="entry name" value="Cysteine--tRNA ligase"/>
    <property type="match status" value="1"/>
</dbReference>
<dbReference type="Gene3D" id="1.20.120.1910">
    <property type="entry name" value="Cysteine-tRNA ligase, C-terminal anti-codon recognition domain"/>
    <property type="match status" value="1"/>
</dbReference>
<dbReference type="Gene3D" id="3.40.50.620">
    <property type="entry name" value="HUPs"/>
    <property type="match status" value="1"/>
</dbReference>
<dbReference type="HAMAP" id="MF_00041">
    <property type="entry name" value="Cys_tRNA_synth"/>
    <property type="match status" value="1"/>
</dbReference>
<dbReference type="InterPro" id="IPR015803">
    <property type="entry name" value="Cys-tRNA-ligase"/>
</dbReference>
<dbReference type="InterPro" id="IPR015273">
    <property type="entry name" value="Cys-tRNA-synt_Ia_DALR"/>
</dbReference>
<dbReference type="InterPro" id="IPR024909">
    <property type="entry name" value="Cys-tRNA/MSH_ligase"/>
</dbReference>
<dbReference type="InterPro" id="IPR014729">
    <property type="entry name" value="Rossmann-like_a/b/a_fold"/>
</dbReference>
<dbReference type="InterPro" id="IPR032678">
    <property type="entry name" value="tRNA-synt_1_cat_dom"/>
</dbReference>
<dbReference type="InterPro" id="IPR009080">
    <property type="entry name" value="tRNAsynth_Ia_anticodon-bd"/>
</dbReference>
<dbReference type="NCBIfam" id="TIGR00435">
    <property type="entry name" value="cysS"/>
    <property type="match status" value="1"/>
</dbReference>
<dbReference type="PANTHER" id="PTHR10890:SF3">
    <property type="entry name" value="CYSTEINE--TRNA LIGASE, CYTOPLASMIC"/>
    <property type="match status" value="1"/>
</dbReference>
<dbReference type="PANTHER" id="PTHR10890">
    <property type="entry name" value="CYSTEINYL-TRNA SYNTHETASE"/>
    <property type="match status" value="1"/>
</dbReference>
<dbReference type="Pfam" id="PF01406">
    <property type="entry name" value="tRNA-synt_1e"/>
    <property type="match status" value="1"/>
</dbReference>
<dbReference type="PRINTS" id="PR00983">
    <property type="entry name" value="TRNASYNTHCYS"/>
</dbReference>
<dbReference type="SMART" id="SM00840">
    <property type="entry name" value="DALR_2"/>
    <property type="match status" value="1"/>
</dbReference>
<dbReference type="SUPFAM" id="SSF47323">
    <property type="entry name" value="Anticodon-binding domain of a subclass of class I aminoacyl-tRNA synthetases"/>
    <property type="match status" value="1"/>
</dbReference>
<dbReference type="SUPFAM" id="SSF52374">
    <property type="entry name" value="Nucleotidylyl transferase"/>
    <property type="match status" value="1"/>
</dbReference>